<evidence type="ECO:0000255" key="1">
    <source>
        <dbReference type="HAMAP-Rule" id="MF_01302"/>
    </source>
</evidence>
<evidence type="ECO:0000305" key="2"/>
<sequence>MSMQDTVGDMLTRIRNAQMANKVSVAMPNSKLRKSIADLLVNEGYVASAVVTEENNNKATLTIVLKYFEGKAVIETIQRFSRPGLRQHRGKDAIPTVKQGMGVAIVSTSQGIMTDRAARAAGIGGEVVAFVA</sequence>
<accession>Q1QDH2</accession>
<organism>
    <name type="scientific">Psychrobacter cryohalolentis (strain ATCC BAA-1226 / DSM 17306 / VKM B-2378 / K5)</name>
    <dbReference type="NCBI Taxonomy" id="335284"/>
    <lineage>
        <taxon>Bacteria</taxon>
        <taxon>Pseudomonadati</taxon>
        <taxon>Pseudomonadota</taxon>
        <taxon>Gammaproteobacteria</taxon>
        <taxon>Moraxellales</taxon>
        <taxon>Moraxellaceae</taxon>
        <taxon>Psychrobacter</taxon>
    </lineage>
</organism>
<protein>
    <recommendedName>
        <fullName evidence="1">Small ribosomal subunit protein uS8</fullName>
    </recommendedName>
    <alternativeName>
        <fullName evidence="2">30S ribosomal protein S8</fullName>
    </alternativeName>
</protein>
<name>RS8_PSYCK</name>
<reference key="1">
    <citation type="submission" date="2006-03" db="EMBL/GenBank/DDBJ databases">
        <title>Complete sequence of chromosome of Psychrobacter cryohalolentis K5.</title>
        <authorList>
            <consortium name="US DOE Joint Genome Institute"/>
            <person name="Copeland A."/>
            <person name="Lucas S."/>
            <person name="Lapidus A."/>
            <person name="Barry K."/>
            <person name="Detter J.C."/>
            <person name="Glavina T."/>
            <person name="Hammon N."/>
            <person name="Israni S."/>
            <person name="Dalin E."/>
            <person name="Tice H."/>
            <person name="Pitluck S."/>
            <person name="Brettin T."/>
            <person name="Bruce D."/>
            <person name="Han C."/>
            <person name="Tapia R."/>
            <person name="Sims D.R."/>
            <person name="Gilna P."/>
            <person name="Schmutz J."/>
            <person name="Larimer F."/>
            <person name="Land M."/>
            <person name="Hauser L."/>
            <person name="Kyrpides N."/>
            <person name="Kim E."/>
            <person name="Richardson P."/>
        </authorList>
    </citation>
    <scope>NUCLEOTIDE SEQUENCE [LARGE SCALE GENOMIC DNA]</scope>
    <source>
        <strain>ATCC BAA-1226 / DSM 17306 / VKM B-2378 / K5</strain>
    </source>
</reference>
<keyword id="KW-0687">Ribonucleoprotein</keyword>
<keyword id="KW-0689">Ribosomal protein</keyword>
<keyword id="KW-0694">RNA-binding</keyword>
<keyword id="KW-0699">rRNA-binding</keyword>
<dbReference type="EMBL" id="CP000323">
    <property type="protein sequence ID" value="ABE74281.1"/>
    <property type="molecule type" value="Genomic_DNA"/>
</dbReference>
<dbReference type="RefSeq" id="WP_011512859.1">
    <property type="nucleotide sequence ID" value="NC_007969.1"/>
</dbReference>
<dbReference type="SMR" id="Q1QDH2"/>
<dbReference type="STRING" id="335284.Pcryo_0498"/>
<dbReference type="KEGG" id="pcr:Pcryo_0498"/>
<dbReference type="eggNOG" id="COG0096">
    <property type="taxonomic scope" value="Bacteria"/>
</dbReference>
<dbReference type="HOGENOM" id="CLU_098428_0_0_6"/>
<dbReference type="Proteomes" id="UP000002425">
    <property type="component" value="Chromosome"/>
</dbReference>
<dbReference type="GO" id="GO:1990904">
    <property type="term" value="C:ribonucleoprotein complex"/>
    <property type="evidence" value="ECO:0007669"/>
    <property type="project" value="UniProtKB-KW"/>
</dbReference>
<dbReference type="GO" id="GO:0005840">
    <property type="term" value="C:ribosome"/>
    <property type="evidence" value="ECO:0007669"/>
    <property type="project" value="UniProtKB-KW"/>
</dbReference>
<dbReference type="GO" id="GO:0019843">
    <property type="term" value="F:rRNA binding"/>
    <property type="evidence" value="ECO:0007669"/>
    <property type="project" value="UniProtKB-UniRule"/>
</dbReference>
<dbReference type="GO" id="GO:0003735">
    <property type="term" value="F:structural constituent of ribosome"/>
    <property type="evidence" value="ECO:0007669"/>
    <property type="project" value="InterPro"/>
</dbReference>
<dbReference type="GO" id="GO:0006412">
    <property type="term" value="P:translation"/>
    <property type="evidence" value="ECO:0007669"/>
    <property type="project" value="UniProtKB-UniRule"/>
</dbReference>
<dbReference type="FunFam" id="3.30.1370.30:FF:000002">
    <property type="entry name" value="30S ribosomal protein S8"/>
    <property type="match status" value="1"/>
</dbReference>
<dbReference type="FunFam" id="3.30.1490.10:FF:000001">
    <property type="entry name" value="30S ribosomal protein S8"/>
    <property type="match status" value="1"/>
</dbReference>
<dbReference type="Gene3D" id="3.30.1370.30">
    <property type="match status" value="1"/>
</dbReference>
<dbReference type="Gene3D" id="3.30.1490.10">
    <property type="match status" value="1"/>
</dbReference>
<dbReference type="HAMAP" id="MF_01302_B">
    <property type="entry name" value="Ribosomal_uS8_B"/>
    <property type="match status" value="1"/>
</dbReference>
<dbReference type="InterPro" id="IPR000630">
    <property type="entry name" value="Ribosomal_uS8"/>
</dbReference>
<dbReference type="InterPro" id="IPR047863">
    <property type="entry name" value="Ribosomal_uS8_CS"/>
</dbReference>
<dbReference type="InterPro" id="IPR035987">
    <property type="entry name" value="Ribosomal_uS8_sf"/>
</dbReference>
<dbReference type="NCBIfam" id="NF001109">
    <property type="entry name" value="PRK00136.1"/>
    <property type="match status" value="1"/>
</dbReference>
<dbReference type="PANTHER" id="PTHR11758">
    <property type="entry name" value="40S RIBOSOMAL PROTEIN S15A"/>
    <property type="match status" value="1"/>
</dbReference>
<dbReference type="Pfam" id="PF00410">
    <property type="entry name" value="Ribosomal_S8"/>
    <property type="match status" value="1"/>
</dbReference>
<dbReference type="SUPFAM" id="SSF56047">
    <property type="entry name" value="Ribosomal protein S8"/>
    <property type="match status" value="1"/>
</dbReference>
<dbReference type="PROSITE" id="PS00053">
    <property type="entry name" value="RIBOSOMAL_S8"/>
    <property type="match status" value="1"/>
</dbReference>
<proteinExistence type="inferred from homology"/>
<gene>
    <name evidence="1" type="primary">rpsH</name>
    <name type="ordered locus">Pcryo_0498</name>
</gene>
<comment type="function">
    <text evidence="1">One of the primary rRNA binding proteins, it binds directly to 16S rRNA central domain where it helps coordinate assembly of the platform of the 30S subunit.</text>
</comment>
<comment type="subunit">
    <text evidence="1">Part of the 30S ribosomal subunit. Contacts proteins S5 and S12.</text>
</comment>
<comment type="similarity">
    <text evidence="1">Belongs to the universal ribosomal protein uS8 family.</text>
</comment>
<feature type="chain" id="PRO_0000290906" description="Small ribosomal subunit protein uS8">
    <location>
        <begin position="1"/>
        <end position="132"/>
    </location>
</feature>